<dbReference type="EC" id="5.4.2.12" evidence="1"/>
<dbReference type="EMBL" id="AP006716">
    <property type="protein sequence ID" value="BAE05419.1"/>
    <property type="molecule type" value="Genomic_DNA"/>
</dbReference>
<dbReference type="RefSeq" id="WP_011276374.1">
    <property type="nucleotide sequence ID" value="NC_007168.1"/>
</dbReference>
<dbReference type="SMR" id="Q4L4K6"/>
<dbReference type="KEGG" id="sha:SH2110"/>
<dbReference type="eggNOG" id="COG0696">
    <property type="taxonomic scope" value="Bacteria"/>
</dbReference>
<dbReference type="HOGENOM" id="CLU_026099_2_0_9"/>
<dbReference type="OrthoDB" id="9800863at2"/>
<dbReference type="UniPathway" id="UPA00109">
    <property type="reaction ID" value="UER00186"/>
</dbReference>
<dbReference type="Proteomes" id="UP000000543">
    <property type="component" value="Chromosome"/>
</dbReference>
<dbReference type="GO" id="GO:0005829">
    <property type="term" value="C:cytosol"/>
    <property type="evidence" value="ECO:0007669"/>
    <property type="project" value="TreeGrafter"/>
</dbReference>
<dbReference type="GO" id="GO:0030145">
    <property type="term" value="F:manganese ion binding"/>
    <property type="evidence" value="ECO:0007669"/>
    <property type="project" value="UniProtKB-UniRule"/>
</dbReference>
<dbReference type="GO" id="GO:0004619">
    <property type="term" value="F:phosphoglycerate mutase activity"/>
    <property type="evidence" value="ECO:0007669"/>
    <property type="project" value="UniProtKB-EC"/>
</dbReference>
<dbReference type="GO" id="GO:0006007">
    <property type="term" value="P:glucose catabolic process"/>
    <property type="evidence" value="ECO:0007669"/>
    <property type="project" value="InterPro"/>
</dbReference>
<dbReference type="GO" id="GO:0006096">
    <property type="term" value="P:glycolytic process"/>
    <property type="evidence" value="ECO:0007669"/>
    <property type="project" value="UniProtKB-UniRule"/>
</dbReference>
<dbReference type="CDD" id="cd16010">
    <property type="entry name" value="iPGM"/>
    <property type="match status" value="1"/>
</dbReference>
<dbReference type="FunFam" id="3.40.1450.10:FF:000001">
    <property type="entry name" value="2,3-bisphosphoglycerate-independent phosphoglycerate mutase"/>
    <property type="match status" value="1"/>
</dbReference>
<dbReference type="FunFam" id="3.40.720.10:FF:000001">
    <property type="entry name" value="2,3-bisphosphoglycerate-independent phosphoglycerate mutase"/>
    <property type="match status" value="1"/>
</dbReference>
<dbReference type="Gene3D" id="3.40.720.10">
    <property type="entry name" value="Alkaline Phosphatase, subunit A"/>
    <property type="match status" value="1"/>
</dbReference>
<dbReference type="Gene3D" id="3.40.1450.10">
    <property type="entry name" value="BPG-independent phosphoglycerate mutase, domain B"/>
    <property type="match status" value="1"/>
</dbReference>
<dbReference type="HAMAP" id="MF_01038">
    <property type="entry name" value="GpmI"/>
    <property type="match status" value="1"/>
</dbReference>
<dbReference type="InterPro" id="IPR017850">
    <property type="entry name" value="Alkaline_phosphatase_core_sf"/>
</dbReference>
<dbReference type="InterPro" id="IPR011258">
    <property type="entry name" value="BPG-indep_PGM_N"/>
</dbReference>
<dbReference type="InterPro" id="IPR006124">
    <property type="entry name" value="Metalloenzyme"/>
</dbReference>
<dbReference type="InterPro" id="IPR036646">
    <property type="entry name" value="PGAM_B_sf"/>
</dbReference>
<dbReference type="InterPro" id="IPR005995">
    <property type="entry name" value="Pgm_bpd_ind"/>
</dbReference>
<dbReference type="NCBIfam" id="TIGR01307">
    <property type="entry name" value="pgm_bpd_ind"/>
    <property type="match status" value="1"/>
</dbReference>
<dbReference type="PANTHER" id="PTHR31637">
    <property type="entry name" value="2,3-BISPHOSPHOGLYCERATE-INDEPENDENT PHOSPHOGLYCERATE MUTASE"/>
    <property type="match status" value="1"/>
</dbReference>
<dbReference type="PANTHER" id="PTHR31637:SF0">
    <property type="entry name" value="2,3-BISPHOSPHOGLYCERATE-INDEPENDENT PHOSPHOGLYCERATE MUTASE"/>
    <property type="match status" value="1"/>
</dbReference>
<dbReference type="Pfam" id="PF06415">
    <property type="entry name" value="iPGM_N"/>
    <property type="match status" value="1"/>
</dbReference>
<dbReference type="Pfam" id="PF01676">
    <property type="entry name" value="Metalloenzyme"/>
    <property type="match status" value="1"/>
</dbReference>
<dbReference type="PIRSF" id="PIRSF001492">
    <property type="entry name" value="IPGAM"/>
    <property type="match status" value="1"/>
</dbReference>
<dbReference type="SUPFAM" id="SSF64158">
    <property type="entry name" value="2,3-Bisphosphoglycerate-independent phosphoglycerate mutase, substrate-binding domain"/>
    <property type="match status" value="1"/>
</dbReference>
<dbReference type="SUPFAM" id="SSF53649">
    <property type="entry name" value="Alkaline phosphatase-like"/>
    <property type="match status" value="1"/>
</dbReference>
<keyword id="KW-0324">Glycolysis</keyword>
<keyword id="KW-0413">Isomerase</keyword>
<keyword id="KW-0464">Manganese</keyword>
<keyword id="KW-0479">Metal-binding</keyword>
<proteinExistence type="inferred from homology"/>
<feature type="chain" id="PRO_0000212215" description="2,3-bisphosphoglycerate-independent phosphoglycerate mutase">
    <location>
        <begin position="1"/>
        <end position="505"/>
    </location>
</feature>
<feature type="active site" description="Phosphoserine intermediate" evidence="1">
    <location>
        <position position="62"/>
    </location>
</feature>
<feature type="binding site" evidence="1">
    <location>
        <position position="12"/>
    </location>
    <ligand>
        <name>Mn(2+)</name>
        <dbReference type="ChEBI" id="CHEBI:29035"/>
        <label>2</label>
    </ligand>
</feature>
<feature type="binding site" evidence="1">
    <location>
        <position position="62"/>
    </location>
    <ligand>
        <name>Mn(2+)</name>
        <dbReference type="ChEBI" id="CHEBI:29035"/>
        <label>2</label>
    </ligand>
</feature>
<feature type="binding site" evidence="1">
    <location>
        <position position="123"/>
    </location>
    <ligand>
        <name>substrate</name>
    </ligand>
</feature>
<feature type="binding site" evidence="1">
    <location>
        <begin position="153"/>
        <end position="154"/>
    </location>
    <ligand>
        <name>substrate</name>
    </ligand>
</feature>
<feature type="binding site" evidence="1">
    <location>
        <position position="185"/>
    </location>
    <ligand>
        <name>substrate</name>
    </ligand>
</feature>
<feature type="binding site" evidence="1">
    <location>
        <position position="191"/>
    </location>
    <ligand>
        <name>substrate</name>
    </ligand>
</feature>
<feature type="binding site" evidence="1">
    <location>
        <begin position="257"/>
        <end position="260"/>
    </location>
    <ligand>
        <name>substrate</name>
    </ligand>
</feature>
<feature type="binding site" evidence="1">
    <location>
        <position position="330"/>
    </location>
    <ligand>
        <name>substrate</name>
    </ligand>
</feature>
<feature type="binding site" evidence="1">
    <location>
        <position position="397"/>
    </location>
    <ligand>
        <name>Mn(2+)</name>
        <dbReference type="ChEBI" id="CHEBI:29035"/>
        <label>1</label>
    </ligand>
</feature>
<feature type="binding site" evidence="1">
    <location>
        <position position="401"/>
    </location>
    <ligand>
        <name>Mn(2+)</name>
        <dbReference type="ChEBI" id="CHEBI:29035"/>
        <label>1</label>
    </ligand>
</feature>
<feature type="binding site" evidence="1">
    <location>
        <position position="438"/>
    </location>
    <ligand>
        <name>Mn(2+)</name>
        <dbReference type="ChEBI" id="CHEBI:29035"/>
        <label>2</label>
    </ligand>
</feature>
<feature type="binding site" evidence="1">
    <location>
        <position position="439"/>
    </location>
    <ligand>
        <name>Mn(2+)</name>
        <dbReference type="ChEBI" id="CHEBI:29035"/>
        <label>2</label>
    </ligand>
</feature>
<feature type="binding site" evidence="1">
    <location>
        <position position="456"/>
    </location>
    <ligand>
        <name>Mn(2+)</name>
        <dbReference type="ChEBI" id="CHEBI:29035"/>
        <label>1</label>
    </ligand>
</feature>
<protein>
    <recommendedName>
        <fullName evidence="1">2,3-bisphosphoglycerate-independent phosphoglycerate mutase</fullName>
        <shortName evidence="1">BPG-independent PGAM</shortName>
        <shortName evidence="1">Phosphoglyceromutase</shortName>
        <shortName evidence="1">iPGM</shortName>
        <ecNumber evidence="1">5.4.2.12</ecNumber>
    </recommendedName>
</protein>
<organism>
    <name type="scientific">Staphylococcus haemolyticus (strain JCSC1435)</name>
    <dbReference type="NCBI Taxonomy" id="279808"/>
    <lineage>
        <taxon>Bacteria</taxon>
        <taxon>Bacillati</taxon>
        <taxon>Bacillota</taxon>
        <taxon>Bacilli</taxon>
        <taxon>Bacillales</taxon>
        <taxon>Staphylococcaceae</taxon>
        <taxon>Staphylococcus</taxon>
    </lineage>
</organism>
<accession>Q4L4K6</accession>
<evidence type="ECO:0000255" key="1">
    <source>
        <dbReference type="HAMAP-Rule" id="MF_01038"/>
    </source>
</evidence>
<sequence>MAKQPTALIILDGFANRESEHGNAVKQAHKPNFDRYYSKYPTTQIEASGLDVGLPEGQMGNSEVGHMNIGAGRIVYQSLTRINKSIADGDFFENDVLNNAVQHVNEHDSALHVFGLLSDGGVHSHYQHLFALLELAKQKGLDKVYVHAFLDGRDVDQKSALKYIEETEAKFKSLGVGEFASISGRYYAMDRDKRWDREQKAYNAIRNFEGPAYASAKEGVEANYANDLTDEFVEPFIVEGQNNGINDGDAVIFFNFRPDRAAQLSEVFTNKAFDGFKVEQVKDLFYATFTKYNDNVDTEVVFEKVDLTNTIGEVAQNNNLKQLRIAETEKYPHVTYFMSGGRNEEFEGERRRLIDSPKVATYDLKPEMSAYEVKDALLEELDKGDLDLIILNFANPDMVGHSGMLEPTIKAIEAVDECLGEVVDKILDMNGYAIITADHGNSDQVLTDDDQPMTTHTTNPVPVIVTKEGVTLRETGRLGDLAPTLLDLLNVGQPSDMTGESLIKH</sequence>
<comment type="function">
    <text evidence="1">Catalyzes the interconversion of 2-phosphoglycerate and 3-phosphoglycerate.</text>
</comment>
<comment type="catalytic activity">
    <reaction evidence="1">
        <text>(2R)-2-phosphoglycerate = (2R)-3-phosphoglycerate</text>
        <dbReference type="Rhea" id="RHEA:15901"/>
        <dbReference type="ChEBI" id="CHEBI:58272"/>
        <dbReference type="ChEBI" id="CHEBI:58289"/>
        <dbReference type="EC" id="5.4.2.12"/>
    </reaction>
</comment>
<comment type="cofactor">
    <cofactor evidence="1">
        <name>Mn(2+)</name>
        <dbReference type="ChEBI" id="CHEBI:29035"/>
    </cofactor>
    <text evidence="1">Binds 2 manganese ions per subunit.</text>
</comment>
<comment type="pathway">
    <text evidence="1">Carbohydrate degradation; glycolysis; pyruvate from D-glyceraldehyde 3-phosphate: step 3/5.</text>
</comment>
<comment type="subunit">
    <text evidence="1">Monomer.</text>
</comment>
<comment type="similarity">
    <text evidence="1">Belongs to the BPG-independent phosphoglycerate mutase family.</text>
</comment>
<gene>
    <name evidence="1" type="primary">gpmI</name>
    <name type="ordered locus">SH2110</name>
</gene>
<name>GPMI_STAHJ</name>
<reference key="1">
    <citation type="journal article" date="2005" name="J. Bacteriol.">
        <title>Whole-genome sequencing of Staphylococcus haemolyticus uncovers the extreme plasticity of its genome and the evolution of human-colonizing staphylococcal species.</title>
        <authorList>
            <person name="Takeuchi F."/>
            <person name="Watanabe S."/>
            <person name="Baba T."/>
            <person name="Yuzawa H."/>
            <person name="Ito T."/>
            <person name="Morimoto Y."/>
            <person name="Kuroda M."/>
            <person name="Cui L."/>
            <person name="Takahashi M."/>
            <person name="Ankai A."/>
            <person name="Baba S."/>
            <person name="Fukui S."/>
            <person name="Lee J.C."/>
            <person name="Hiramatsu K."/>
        </authorList>
    </citation>
    <scope>NUCLEOTIDE SEQUENCE [LARGE SCALE GENOMIC DNA]</scope>
    <source>
        <strain>JCSC1435</strain>
    </source>
</reference>